<accession>Q60A14</accession>
<name>PTH_METCA</name>
<proteinExistence type="inferred from homology"/>
<reference key="1">
    <citation type="journal article" date="2004" name="PLoS Biol.">
        <title>Genomic insights into methanotrophy: the complete genome sequence of Methylococcus capsulatus (Bath).</title>
        <authorList>
            <person name="Ward N.L."/>
            <person name="Larsen O."/>
            <person name="Sakwa J."/>
            <person name="Bruseth L."/>
            <person name="Khouri H.M."/>
            <person name="Durkin A.S."/>
            <person name="Dimitrov G."/>
            <person name="Jiang L."/>
            <person name="Scanlan D."/>
            <person name="Kang K.H."/>
            <person name="Lewis M.R."/>
            <person name="Nelson K.E."/>
            <person name="Methe B.A."/>
            <person name="Wu M."/>
            <person name="Heidelberg J.F."/>
            <person name="Paulsen I.T."/>
            <person name="Fouts D.E."/>
            <person name="Ravel J."/>
            <person name="Tettelin H."/>
            <person name="Ren Q."/>
            <person name="Read T.D."/>
            <person name="DeBoy R.T."/>
            <person name="Seshadri R."/>
            <person name="Salzberg S.L."/>
            <person name="Jensen H.B."/>
            <person name="Birkeland N.K."/>
            <person name="Nelson W.C."/>
            <person name="Dodson R.J."/>
            <person name="Grindhaug S.H."/>
            <person name="Holt I.E."/>
            <person name="Eidhammer I."/>
            <person name="Jonasen I."/>
            <person name="Vanaken S."/>
            <person name="Utterback T.R."/>
            <person name="Feldblyum T.V."/>
            <person name="Fraser C.M."/>
            <person name="Lillehaug J.R."/>
            <person name="Eisen J.A."/>
        </authorList>
    </citation>
    <scope>NUCLEOTIDE SEQUENCE [LARGE SCALE GENOMIC DNA]</scope>
    <source>
        <strain>ATCC 33009 / NCIMB 11132 / Bath</strain>
    </source>
</reference>
<comment type="function">
    <text evidence="1">Hydrolyzes ribosome-free peptidyl-tRNAs (with 1 or more amino acids incorporated), which drop off the ribosome during protein synthesis, or as a result of ribosome stalling.</text>
</comment>
<comment type="function">
    <text evidence="1">Catalyzes the release of premature peptidyl moieties from peptidyl-tRNA molecules trapped in stalled 50S ribosomal subunits, and thus maintains levels of free tRNAs and 50S ribosomes.</text>
</comment>
<comment type="catalytic activity">
    <reaction evidence="1">
        <text>an N-acyl-L-alpha-aminoacyl-tRNA + H2O = an N-acyl-L-amino acid + a tRNA + H(+)</text>
        <dbReference type="Rhea" id="RHEA:54448"/>
        <dbReference type="Rhea" id="RHEA-COMP:10123"/>
        <dbReference type="Rhea" id="RHEA-COMP:13883"/>
        <dbReference type="ChEBI" id="CHEBI:15377"/>
        <dbReference type="ChEBI" id="CHEBI:15378"/>
        <dbReference type="ChEBI" id="CHEBI:59874"/>
        <dbReference type="ChEBI" id="CHEBI:78442"/>
        <dbReference type="ChEBI" id="CHEBI:138191"/>
        <dbReference type="EC" id="3.1.1.29"/>
    </reaction>
</comment>
<comment type="subunit">
    <text evidence="1">Monomer.</text>
</comment>
<comment type="subcellular location">
    <subcellularLocation>
        <location evidence="1">Cytoplasm</location>
    </subcellularLocation>
</comment>
<comment type="similarity">
    <text evidence="1">Belongs to the PTH family.</text>
</comment>
<feature type="chain" id="PRO_0000187768" description="Peptidyl-tRNA hydrolase">
    <location>
        <begin position="1"/>
        <end position="187"/>
    </location>
</feature>
<feature type="active site" description="Proton acceptor" evidence="1">
    <location>
        <position position="20"/>
    </location>
</feature>
<feature type="binding site" evidence="1">
    <location>
        <position position="15"/>
    </location>
    <ligand>
        <name>tRNA</name>
        <dbReference type="ChEBI" id="CHEBI:17843"/>
    </ligand>
</feature>
<feature type="binding site" evidence="1">
    <location>
        <position position="65"/>
    </location>
    <ligand>
        <name>tRNA</name>
        <dbReference type="ChEBI" id="CHEBI:17843"/>
    </ligand>
</feature>
<feature type="binding site" evidence="1">
    <location>
        <position position="67"/>
    </location>
    <ligand>
        <name>tRNA</name>
        <dbReference type="ChEBI" id="CHEBI:17843"/>
    </ligand>
</feature>
<feature type="binding site" evidence="1">
    <location>
        <position position="113"/>
    </location>
    <ligand>
        <name>tRNA</name>
        <dbReference type="ChEBI" id="CHEBI:17843"/>
    </ligand>
</feature>
<feature type="site" description="Discriminates between blocked and unblocked aminoacyl-tRNA" evidence="1">
    <location>
        <position position="10"/>
    </location>
</feature>
<feature type="site" description="Stabilizes the basic form of H active site to accept a proton" evidence="1">
    <location>
        <position position="92"/>
    </location>
</feature>
<evidence type="ECO:0000255" key="1">
    <source>
        <dbReference type="HAMAP-Rule" id="MF_00083"/>
    </source>
</evidence>
<protein>
    <recommendedName>
        <fullName evidence="1">Peptidyl-tRNA hydrolase</fullName>
        <shortName evidence="1">Pth</shortName>
        <ecNumber evidence="1">3.1.1.29</ecNumber>
    </recommendedName>
</protein>
<organism>
    <name type="scientific">Methylococcus capsulatus (strain ATCC 33009 / NCIMB 11132 / Bath)</name>
    <dbReference type="NCBI Taxonomy" id="243233"/>
    <lineage>
        <taxon>Bacteria</taxon>
        <taxon>Pseudomonadati</taxon>
        <taxon>Pseudomonadota</taxon>
        <taxon>Gammaproteobacteria</taxon>
        <taxon>Methylococcales</taxon>
        <taxon>Methylococcaceae</taxon>
        <taxon>Methylococcus</taxon>
    </lineage>
</organism>
<keyword id="KW-0963">Cytoplasm</keyword>
<keyword id="KW-0378">Hydrolase</keyword>
<keyword id="KW-1185">Reference proteome</keyword>
<keyword id="KW-0694">RNA-binding</keyword>
<keyword id="KW-0820">tRNA-binding</keyword>
<dbReference type="EC" id="3.1.1.29" evidence="1"/>
<dbReference type="EMBL" id="AE017282">
    <property type="protein sequence ID" value="AAU92684.1"/>
    <property type="molecule type" value="Genomic_DNA"/>
</dbReference>
<dbReference type="RefSeq" id="WP_010960358.1">
    <property type="nucleotide sequence ID" value="NC_002977.6"/>
</dbReference>
<dbReference type="SMR" id="Q60A14"/>
<dbReference type="STRING" id="243233.MCA1058"/>
<dbReference type="GeneID" id="88223351"/>
<dbReference type="KEGG" id="mca:MCA1058"/>
<dbReference type="eggNOG" id="COG0193">
    <property type="taxonomic scope" value="Bacteria"/>
</dbReference>
<dbReference type="HOGENOM" id="CLU_062456_3_1_6"/>
<dbReference type="Proteomes" id="UP000006821">
    <property type="component" value="Chromosome"/>
</dbReference>
<dbReference type="GO" id="GO:0005737">
    <property type="term" value="C:cytoplasm"/>
    <property type="evidence" value="ECO:0007669"/>
    <property type="project" value="UniProtKB-SubCell"/>
</dbReference>
<dbReference type="GO" id="GO:0004045">
    <property type="term" value="F:peptidyl-tRNA hydrolase activity"/>
    <property type="evidence" value="ECO:0007669"/>
    <property type="project" value="UniProtKB-UniRule"/>
</dbReference>
<dbReference type="GO" id="GO:0000049">
    <property type="term" value="F:tRNA binding"/>
    <property type="evidence" value="ECO:0007669"/>
    <property type="project" value="UniProtKB-UniRule"/>
</dbReference>
<dbReference type="GO" id="GO:0006515">
    <property type="term" value="P:protein quality control for misfolded or incompletely synthesized proteins"/>
    <property type="evidence" value="ECO:0007669"/>
    <property type="project" value="UniProtKB-UniRule"/>
</dbReference>
<dbReference type="GO" id="GO:0072344">
    <property type="term" value="P:rescue of stalled ribosome"/>
    <property type="evidence" value="ECO:0007669"/>
    <property type="project" value="UniProtKB-UniRule"/>
</dbReference>
<dbReference type="CDD" id="cd00462">
    <property type="entry name" value="PTH"/>
    <property type="match status" value="1"/>
</dbReference>
<dbReference type="FunFam" id="3.40.50.1470:FF:000001">
    <property type="entry name" value="Peptidyl-tRNA hydrolase"/>
    <property type="match status" value="1"/>
</dbReference>
<dbReference type="Gene3D" id="3.40.50.1470">
    <property type="entry name" value="Peptidyl-tRNA hydrolase"/>
    <property type="match status" value="1"/>
</dbReference>
<dbReference type="HAMAP" id="MF_00083">
    <property type="entry name" value="Pept_tRNA_hydro_bact"/>
    <property type="match status" value="1"/>
</dbReference>
<dbReference type="InterPro" id="IPR001328">
    <property type="entry name" value="Pept_tRNA_hydro"/>
</dbReference>
<dbReference type="InterPro" id="IPR018171">
    <property type="entry name" value="Pept_tRNA_hydro_CS"/>
</dbReference>
<dbReference type="InterPro" id="IPR036416">
    <property type="entry name" value="Pept_tRNA_hydro_sf"/>
</dbReference>
<dbReference type="NCBIfam" id="TIGR00447">
    <property type="entry name" value="pth"/>
    <property type="match status" value="1"/>
</dbReference>
<dbReference type="PANTHER" id="PTHR17224">
    <property type="entry name" value="PEPTIDYL-TRNA HYDROLASE"/>
    <property type="match status" value="1"/>
</dbReference>
<dbReference type="PANTHER" id="PTHR17224:SF1">
    <property type="entry name" value="PEPTIDYL-TRNA HYDROLASE"/>
    <property type="match status" value="1"/>
</dbReference>
<dbReference type="Pfam" id="PF01195">
    <property type="entry name" value="Pept_tRNA_hydro"/>
    <property type="match status" value="1"/>
</dbReference>
<dbReference type="SUPFAM" id="SSF53178">
    <property type="entry name" value="Peptidyl-tRNA hydrolase-like"/>
    <property type="match status" value="1"/>
</dbReference>
<dbReference type="PROSITE" id="PS01195">
    <property type="entry name" value="PEPT_TRNA_HYDROL_1"/>
    <property type="match status" value="1"/>
</dbReference>
<dbReference type="PROSITE" id="PS01196">
    <property type="entry name" value="PEPT_TRNA_HYDROL_2"/>
    <property type="match status" value="1"/>
</dbReference>
<gene>
    <name evidence="1" type="primary">pth</name>
    <name type="ordered locus">MCA1058</name>
</gene>
<sequence length="187" mass="20082">MVRLIVGLGNPGPAYDRTRHNAGFWFIDRLAAAHGCVLREESRFHGRVGAINLTEPVHLLAPLTFMNRSGLAVAAMARFYKIAPEHILVVHDELDFGPGVVRIKRDGGHGGHNGLRDIMAQLGSGGFLRLRIGIGRPAGSMAVADYVLAAPSVSDRQAISGAIEKALACLSELLAGHVEQVMNRLHV</sequence>